<name>EXP32_ORYSJ</name>
<protein>
    <recommendedName>
        <fullName>Expansin-A32</fullName>
    </recommendedName>
    <alternativeName>
        <fullName>Alpha-expansin-32</fullName>
    </alternativeName>
    <alternativeName>
        <fullName>OsEXP32</fullName>
    </alternativeName>
    <alternativeName>
        <fullName>OsEXPA32</fullName>
    </alternativeName>
    <alternativeName>
        <fullName>OsaEXPa1.30</fullName>
    </alternativeName>
</protein>
<feature type="signal peptide" evidence="2">
    <location>
        <begin position="1"/>
        <end position="25"/>
    </location>
</feature>
<feature type="chain" id="PRO_0000252011" description="Expansin-A32">
    <location>
        <begin position="26"/>
        <end position="269"/>
    </location>
</feature>
<feature type="domain" description="Expansin-like EG45" evidence="4">
    <location>
        <begin position="60"/>
        <end position="174"/>
    </location>
</feature>
<feature type="domain" description="Expansin-like CBD" evidence="3">
    <location>
        <begin position="184"/>
        <end position="264"/>
    </location>
</feature>
<proteinExistence type="evidence at transcript level"/>
<gene>
    <name type="primary">EXPA32</name>
    <name type="synonym">EXP32</name>
    <name type="ordered locus">Os08g0561900</name>
    <name type="ordered locus">LOC_Os08g44790</name>
    <name type="ORF">P0543D10.5</name>
    <name type="ORF">P0604E01.45</name>
</gene>
<sequence>MWCTWALGRVVLAVVFLVALAAGDAAPPKVHRNHGKFTAGPWKQAHATFYGGRDGSGTLDGACGYKDTSKEGYGVQTVAVSTPLFGAGAGCGACYEVKCVDSPDGCKVGAAPLVVTATNLCPPNPGQSNDNGGWCNPPREHFDLSMPAFLQIAQEKAGIVPISYRRVPCVKVGGIRYTITGNPYFNLVMVSNVGGAGDVAGLSVKGNKRVKWTPLKRNWGQEWQTSEVLTGESLTFRVMTGDHRKATSWHVLPPDWQFGVTYQATKNFN</sequence>
<accession>Q6YYW5</accession>
<accession>B7EHZ5</accession>
<evidence type="ECO:0000250" key="1"/>
<evidence type="ECO:0000255" key="2"/>
<evidence type="ECO:0000255" key="3">
    <source>
        <dbReference type="PROSITE-ProRule" id="PRU00078"/>
    </source>
</evidence>
<evidence type="ECO:0000255" key="4">
    <source>
        <dbReference type="PROSITE-ProRule" id="PRU00079"/>
    </source>
</evidence>
<evidence type="ECO:0000305" key="5"/>
<keyword id="KW-0134">Cell wall</keyword>
<keyword id="KW-0961">Cell wall biogenesis/degradation</keyword>
<keyword id="KW-0472">Membrane</keyword>
<keyword id="KW-1185">Reference proteome</keyword>
<keyword id="KW-0964">Secreted</keyword>
<keyword id="KW-0732">Signal</keyword>
<comment type="function">
    <text evidence="1">May cause loosening and extension of plant cell walls by disrupting non-covalent bonding between cellulose microfibrils and matrix glucans. No enzymatic activity has been found. May be required for rapid internodal elongation in deepwater rice during submergence (By similarity).</text>
</comment>
<comment type="subcellular location">
    <subcellularLocation>
        <location evidence="1">Secreted</location>
        <location evidence="1">Cell wall</location>
    </subcellularLocation>
    <subcellularLocation>
        <location evidence="1">Membrane</location>
        <topology evidence="1">Peripheral membrane protein</topology>
    </subcellularLocation>
</comment>
<comment type="similarity">
    <text evidence="5">Belongs to the expansin family. Expansin A subfamily.</text>
</comment>
<comment type="online information" name="EXPANSIN homepage">
    <link uri="https://www.dept.psu.edu/biology/groups/expansins/index.htm"/>
</comment>
<reference key="1">
    <citation type="journal article" date="2005" name="Nature">
        <title>The map-based sequence of the rice genome.</title>
        <authorList>
            <consortium name="International rice genome sequencing project (IRGSP)"/>
        </authorList>
    </citation>
    <scope>NUCLEOTIDE SEQUENCE [LARGE SCALE GENOMIC DNA]</scope>
    <source>
        <strain>cv. Nipponbare</strain>
    </source>
</reference>
<reference key="2">
    <citation type="journal article" date="2008" name="Nucleic Acids Res.">
        <title>The rice annotation project database (RAP-DB): 2008 update.</title>
        <authorList>
            <consortium name="The rice annotation project (RAP)"/>
        </authorList>
    </citation>
    <scope>GENOME REANNOTATION</scope>
    <source>
        <strain>cv. Nipponbare</strain>
    </source>
</reference>
<reference key="3">
    <citation type="journal article" date="2013" name="Rice">
        <title>Improvement of the Oryza sativa Nipponbare reference genome using next generation sequence and optical map data.</title>
        <authorList>
            <person name="Kawahara Y."/>
            <person name="de la Bastide M."/>
            <person name="Hamilton J.P."/>
            <person name="Kanamori H."/>
            <person name="McCombie W.R."/>
            <person name="Ouyang S."/>
            <person name="Schwartz D.C."/>
            <person name="Tanaka T."/>
            <person name="Wu J."/>
            <person name="Zhou S."/>
            <person name="Childs K.L."/>
            <person name="Davidson R.M."/>
            <person name="Lin H."/>
            <person name="Quesada-Ocampo L."/>
            <person name="Vaillancourt B."/>
            <person name="Sakai H."/>
            <person name="Lee S.S."/>
            <person name="Kim J."/>
            <person name="Numa H."/>
            <person name="Itoh T."/>
            <person name="Buell C.R."/>
            <person name="Matsumoto T."/>
        </authorList>
    </citation>
    <scope>GENOME REANNOTATION</scope>
    <source>
        <strain>cv. Nipponbare</strain>
    </source>
</reference>
<reference key="4">
    <citation type="journal article" date="2003" name="Science">
        <title>Collection, mapping, and annotation of over 28,000 cDNA clones from japonica rice.</title>
        <authorList>
            <consortium name="The rice full-length cDNA consortium"/>
        </authorList>
    </citation>
    <scope>NUCLEOTIDE SEQUENCE [LARGE SCALE MRNA]</scope>
    <source>
        <strain>cv. Nipponbare</strain>
    </source>
</reference>
<reference key="5">
    <citation type="journal article" date="2004" name="Plant Mol. Biol.">
        <title>Nomenclature for members of the expansin superfamily of genes and proteins.</title>
        <authorList>
            <person name="Kende H."/>
            <person name="Bradford K.J."/>
            <person name="Brummell D.A."/>
            <person name="Cho H.-T."/>
            <person name="Cosgrove D.J."/>
            <person name="Fleming A.J."/>
            <person name="Gehring C."/>
            <person name="Lee Y."/>
            <person name="McQueen-Mason S.J."/>
            <person name="Rose J.K.C."/>
            <person name="Voesenek L.A.C."/>
        </authorList>
    </citation>
    <scope>NOMENCLATURE</scope>
</reference>
<dbReference type="EMBL" id="AP004587">
    <property type="protein sequence ID" value="BAD09608.1"/>
    <property type="molecule type" value="Genomic_DNA"/>
</dbReference>
<dbReference type="EMBL" id="AP005544">
    <property type="protein sequence ID" value="BAD13223.1"/>
    <property type="molecule type" value="Genomic_DNA"/>
</dbReference>
<dbReference type="EMBL" id="AP008214">
    <property type="protein sequence ID" value="BAF24430.1"/>
    <property type="molecule type" value="Genomic_DNA"/>
</dbReference>
<dbReference type="EMBL" id="AP014964">
    <property type="protein sequence ID" value="BAT06710.1"/>
    <property type="molecule type" value="Genomic_DNA"/>
</dbReference>
<dbReference type="EMBL" id="AK070505">
    <property type="protein sequence ID" value="BAG91992.1"/>
    <property type="molecule type" value="mRNA"/>
</dbReference>
<dbReference type="RefSeq" id="XP_015649517.1">
    <property type="nucleotide sequence ID" value="XM_015794031.1"/>
</dbReference>
<dbReference type="SMR" id="Q6YYW5"/>
<dbReference type="STRING" id="39947.Q6YYW5"/>
<dbReference type="PaxDb" id="39947-Q6YYW5"/>
<dbReference type="EnsemblPlants" id="Os08t0561900-01">
    <property type="protein sequence ID" value="Os08t0561900-01"/>
    <property type="gene ID" value="Os08g0561900"/>
</dbReference>
<dbReference type="Gramene" id="Os08t0561900-01">
    <property type="protein sequence ID" value="Os08t0561900-01"/>
    <property type="gene ID" value="Os08g0561900"/>
</dbReference>
<dbReference type="KEGG" id="dosa:Os08g0561900"/>
<dbReference type="eggNOG" id="ENOG502QVXY">
    <property type="taxonomic scope" value="Eukaryota"/>
</dbReference>
<dbReference type="HOGENOM" id="CLU_027462_0_2_1"/>
<dbReference type="InParanoid" id="Q6YYW5"/>
<dbReference type="OMA" id="DWGATWK"/>
<dbReference type="OrthoDB" id="5823761at2759"/>
<dbReference type="Proteomes" id="UP000000763">
    <property type="component" value="Chromosome 8"/>
</dbReference>
<dbReference type="Proteomes" id="UP000059680">
    <property type="component" value="Chromosome 8"/>
</dbReference>
<dbReference type="GO" id="GO:0005576">
    <property type="term" value="C:extracellular region"/>
    <property type="evidence" value="ECO:0007669"/>
    <property type="project" value="UniProtKB-KW"/>
</dbReference>
<dbReference type="GO" id="GO:0016020">
    <property type="term" value="C:membrane"/>
    <property type="evidence" value="ECO:0007669"/>
    <property type="project" value="UniProtKB-SubCell"/>
</dbReference>
<dbReference type="GO" id="GO:0009828">
    <property type="term" value="P:plant-type cell wall loosening"/>
    <property type="evidence" value="ECO:0000250"/>
    <property type="project" value="UniProtKB"/>
</dbReference>
<dbReference type="CDD" id="cd22274">
    <property type="entry name" value="DPBB_EXPA_N"/>
    <property type="match status" value="1"/>
</dbReference>
<dbReference type="Gene3D" id="2.60.40.760">
    <property type="entry name" value="Expansin, cellulose-binding-like domain"/>
    <property type="match status" value="1"/>
</dbReference>
<dbReference type="Gene3D" id="2.40.40.10">
    <property type="entry name" value="RlpA-like domain"/>
    <property type="match status" value="1"/>
</dbReference>
<dbReference type="InterPro" id="IPR007118">
    <property type="entry name" value="Expan_Lol_pI"/>
</dbReference>
<dbReference type="InterPro" id="IPR002963">
    <property type="entry name" value="Expansin"/>
</dbReference>
<dbReference type="InterPro" id="IPR007112">
    <property type="entry name" value="Expansin/allergen_DPBB_dom"/>
</dbReference>
<dbReference type="InterPro" id="IPR007117">
    <property type="entry name" value="Expansin_CBD"/>
</dbReference>
<dbReference type="InterPro" id="IPR036749">
    <property type="entry name" value="Expansin_CBD_sf"/>
</dbReference>
<dbReference type="InterPro" id="IPR009009">
    <property type="entry name" value="RlpA-like_DPBB"/>
</dbReference>
<dbReference type="InterPro" id="IPR036908">
    <property type="entry name" value="RlpA-like_sf"/>
</dbReference>
<dbReference type="PANTHER" id="PTHR31867">
    <property type="entry name" value="EXPANSIN-A15"/>
    <property type="match status" value="1"/>
</dbReference>
<dbReference type="Pfam" id="PF03330">
    <property type="entry name" value="DPBB_1"/>
    <property type="match status" value="1"/>
</dbReference>
<dbReference type="Pfam" id="PF01357">
    <property type="entry name" value="Expansin_C"/>
    <property type="match status" value="1"/>
</dbReference>
<dbReference type="PRINTS" id="PR01226">
    <property type="entry name" value="EXPANSIN"/>
</dbReference>
<dbReference type="PRINTS" id="PR01225">
    <property type="entry name" value="EXPANSNFAMLY"/>
</dbReference>
<dbReference type="SMART" id="SM00837">
    <property type="entry name" value="DPBB_1"/>
    <property type="match status" value="1"/>
</dbReference>
<dbReference type="SUPFAM" id="SSF50685">
    <property type="entry name" value="Barwin-like endoglucanases"/>
    <property type="match status" value="1"/>
</dbReference>
<dbReference type="SUPFAM" id="SSF49590">
    <property type="entry name" value="PHL pollen allergen"/>
    <property type="match status" value="1"/>
</dbReference>
<dbReference type="PROSITE" id="PS50843">
    <property type="entry name" value="EXPANSIN_CBD"/>
    <property type="match status" value="1"/>
</dbReference>
<dbReference type="PROSITE" id="PS50842">
    <property type="entry name" value="EXPANSIN_EG45"/>
    <property type="match status" value="1"/>
</dbReference>
<organism>
    <name type="scientific">Oryza sativa subsp. japonica</name>
    <name type="common">Rice</name>
    <dbReference type="NCBI Taxonomy" id="39947"/>
    <lineage>
        <taxon>Eukaryota</taxon>
        <taxon>Viridiplantae</taxon>
        <taxon>Streptophyta</taxon>
        <taxon>Embryophyta</taxon>
        <taxon>Tracheophyta</taxon>
        <taxon>Spermatophyta</taxon>
        <taxon>Magnoliopsida</taxon>
        <taxon>Liliopsida</taxon>
        <taxon>Poales</taxon>
        <taxon>Poaceae</taxon>
        <taxon>BOP clade</taxon>
        <taxon>Oryzoideae</taxon>
        <taxon>Oryzeae</taxon>
        <taxon>Oryzinae</taxon>
        <taxon>Oryza</taxon>
        <taxon>Oryza sativa</taxon>
    </lineage>
</organism>